<organism>
    <name type="scientific">Azotobacter vinelandii</name>
    <dbReference type="NCBI Taxonomy" id="354"/>
    <lineage>
        <taxon>Bacteria</taxon>
        <taxon>Pseudomonadati</taxon>
        <taxon>Pseudomonadota</taxon>
        <taxon>Gammaproteobacteria</taxon>
        <taxon>Pseudomonadales</taxon>
        <taxon>Pseudomonadaceae</taxon>
        <taxon>Azotobacter</taxon>
    </lineage>
</organism>
<name>HOXM_AZOVI</name>
<evidence type="ECO:0000250" key="1"/>
<evidence type="ECO:0000305" key="2"/>
<proteinExistence type="inferred from homology"/>
<feature type="chain" id="PRO_0000201937" description="Hydrogenase expression/formation protein HoxM">
    <location>
        <begin position="1"/>
        <end position="207"/>
    </location>
</feature>
<feature type="binding site" evidence="1">
    <location>
        <position position="19"/>
    </location>
    <ligand>
        <name>Ni(2+)</name>
        <dbReference type="ChEBI" id="CHEBI:49786"/>
    </ligand>
</feature>
<feature type="binding site" evidence="1">
    <location>
        <position position="65"/>
    </location>
    <ligand>
        <name>Ni(2+)</name>
        <dbReference type="ChEBI" id="CHEBI:49786"/>
    </ligand>
</feature>
<feature type="binding site" evidence="1">
    <location>
        <position position="96"/>
    </location>
    <ligand>
        <name>Ni(2+)</name>
        <dbReference type="ChEBI" id="CHEBI:49786"/>
    </ligand>
</feature>
<accession>P40591</accession>
<gene>
    <name type="primary">hoxM</name>
</gene>
<keyword id="KW-0064">Aspartyl protease</keyword>
<keyword id="KW-0378">Hydrolase</keyword>
<keyword id="KW-0479">Metal-binding</keyword>
<keyword id="KW-0533">Nickel</keyword>
<keyword id="KW-0645">Protease</keyword>
<dbReference type="EMBL" id="M80522">
    <property type="protein sequence ID" value="AAA22126.1"/>
    <property type="molecule type" value="Genomic_DNA"/>
</dbReference>
<dbReference type="EMBL" id="L23970">
    <property type="protein sequence ID" value="AAA19501.1"/>
    <property type="molecule type" value="Unassigned_DNA"/>
</dbReference>
<dbReference type="PIR" id="A44915">
    <property type="entry name" value="A44915"/>
</dbReference>
<dbReference type="RefSeq" id="WP_012703497.1">
    <property type="nucleotide sequence ID" value="NZ_FPKM01000029.1"/>
</dbReference>
<dbReference type="SMR" id="P40591"/>
<dbReference type="MEROPS" id="A31.002"/>
<dbReference type="OMA" id="IGCQPLD"/>
<dbReference type="GO" id="GO:0004190">
    <property type="term" value="F:aspartic-type endopeptidase activity"/>
    <property type="evidence" value="ECO:0007669"/>
    <property type="project" value="UniProtKB-KW"/>
</dbReference>
<dbReference type="GO" id="GO:0008047">
    <property type="term" value="F:enzyme activator activity"/>
    <property type="evidence" value="ECO:0007669"/>
    <property type="project" value="InterPro"/>
</dbReference>
<dbReference type="GO" id="GO:0046872">
    <property type="term" value="F:metal ion binding"/>
    <property type="evidence" value="ECO:0007669"/>
    <property type="project" value="UniProtKB-KW"/>
</dbReference>
<dbReference type="GO" id="GO:0016485">
    <property type="term" value="P:protein processing"/>
    <property type="evidence" value="ECO:0007669"/>
    <property type="project" value="InterPro"/>
</dbReference>
<dbReference type="CDD" id="cd06062">
    <property type="entry name" value="H2MP_MemB-H2up"/>
    <property type="match status" value="1"/>
</dbReference>
<dbReference type="FunFam" id="3.40.50.1450:FF:000002">
    <property type="entry name" value="Hydrogenase 1 maturation protease"/>
    <property type="match status" value="1"/>
</dbReference>
<dbReference type="Gene3D" id="3.40.50.1450">
    <property type="entry name" value="HybD-like"/>
    <property type="match status" value="1"/>
</dbReference>
<dbReference type="InterPro" id="IPR004419">
    <property type="entry name" value="Pept_A31_hyd_express"/>
</dbReference>
<dbReference type="InterPro" id="IPR023430">
    <property type="entry name" value="Pept_HybD-like_dom_sf"/>
</dbReference>
<dbReference type="InterPro" id="IPR000671">
    <property type="entry name" value="Peptidase_A31"/>
</dbReference>
<dbReference type="NCBIfam" id="TIGR00140">
    <property type="entry name" value="hupD"/>
    <property type="match status" value="1"/>
</dbReference>
<dbReference type="NCBIfam" id="TIGR00072">
    <property type="entry name" value="hydrog_prot"/>
    <property type="match status" value="1"/>
</dbReference>
<dbReference type="PANTHER" id="PTHR30302">
    <property type="entry name" value="HYDROGENASE 1 MATURATION PROTEASE"/>
    <property type="match status" value="1"/>
</dbReference>
<dbReference type="PANTHER" id="PTHR30302:SF1">
    <property type="entry name" value="HYDROGENASE 2 MATURATION PROTEASE"/>
    <property type="match status" value="1"/>
</dbReference>
<dbReference type="Pfam" id="PF01750">
    <property type="entry name" value="HycI"/>
    <property type="match status" value="1"/>
</dbReference>
<dbReference type="PRINTS" id="PR00446">
    <property type="entry name" value="HYDRGNUPTAKE"/>
</dbReference>
<dbReference type="SUPFAM" id="SSF53163">
    <property type="entry name" value="HybD-like"/>
    <property type="match status" value="1"/>
</dbReference>
<comment type="function">
    <text>Not known. Could be involved in the processing of hydrogenase.</text>
</comment>
<comment type="similarity">
    <text evidence="2">Belongs to the peptidase A31 family.</text>
</comment>
<reference key="1">
    <citation type="journal article" date="1992" name="J. Bacteriol.">
        <title>Nucleotide sequences and genetic analysis of hydrogen oxidation (hox) genes in Azotobacter vinelandii.</title>
        <authorList>
            <person name="Menon A."/>
            <person name="Mortenson L.E."/>
            <person name="Robson R.L."/>
        </authorList>
    </citation>
    <scope>NUCLEOTIDE SEQUENCE [GENOMIC DNA]</scope>
    <source>
        <strain>ATCC 13705 / OP1 / DSM 366 / NCIMB 11614 / LMG 3878 / UW</strain>
    </source>
</reference>
<sequence length="207" mass="22769">MTAPNILILGIGNLLWADEGFGVRCVELLNERYRFPDGVRLMDGGTQGIYLVQHVQQADCLIVFDAVDYGLAPGTLKIVRDDEVPRFMGAKRMSLHQTGFQDVLALAAFSGAYPRELLLIGVQPEELEDFGGSLREPVRAQLEPALRVALEFLAERGVVAAARDGDAERLAPAPLALGRYEAGRPAEELAYRHGDIRFIPQQPLEDD</sequence>
<protein>
    <recommendedName>
        <fullName>Hydrogenase expression/formation protein HoxM</fullName>
    </recommendedName>
</protein>